<feature type="transit peptide" description="Mitochondrion" evidence="1">
    <location>
        <begin position="1"/>
        <end position="30"/>
    </location>
</feature>
<feature type="chain" id="PRO_0000253909" description="Citrate synthase, mitochondrial">
    <location>
        <begin position="31"/>
        <end position="468"/>
    </location>
</feature>
<feature type="active site" evidence="4">
    <location>
        <position position="303"/>
    </location>
</feature>
<feature type="active site" evidence="4">
    <location>
        <position position="349"/>
    </location>
</feature>
<feature type="active site" evidence="4">
    <location>
        <position position="404"/>
    </location>
</feature>
<feature type="binding site" description="in chain A" evidence="2">
    <location>
        <position position="358"/>
    </location>
    <ligand>
        <name>oxaloacetate</name>
        <dbReference type="ChEBI" id="CHEBI:16452"/>
        <note>ligand shared between homodimeric partners</note>
    </ligand>
</feature>
<feature type="binding site" description="in chain A" evidence="2">
    <location>
        <position position="430"/>
    </location>
    <ligand>
        <name>oxaloacetate</name>
        <dbReference type="ChEBI" id="CHEBI:16452"/>
        <note>ligand shared between homodimeric partners</note>
    </ligand>
</feature>
<feature type="binding site" description="in chain B" evidence="2">
    <location>
        <position position="450"/>
    </location>
    <ligand>
        <name>oxaloacetate</name>
        <dbReference type="ChEBI" id="CHEBI:16452"/>
        <note>ligand shared between homodimeric partners</note>
    </ligand>
</feature>
<comment type="function">
    <text evidence="5">Key enzyme of the Krebs tricarboxylic acid cycle which catalyzes the synthesis of citrate from acetyl coenzyme A and oxaloacetate.</text>
</comment>
<comment type="catalytic activity">
    <reaction evidence="4">
        <text>oxaloacetate + acetyl-CoA + H2O = citrate + CoA + H(+)</text>
        <dbReference type="Rhea" id="RHEA:16845"/>
        <dbReference type="ChEBI" id="CHEBI:15377"/>
        <dbReference type="ChEBI" id="CHEBI:15378"/>
        <dbReference type="ChEBI" id="CHEBI:16452"/>
        <dbReference type="ChEBI" id="CHEBI:16947"/>
        <dbReference type="ChEBI" id="CHEBI:57287"/>
        <dbReference type="ChEBI" id="CHEBI:57288"/>
        <dbReference type="EC" id="2.3.3.1"/>
    </reaction>
</comment>
<comment type="pathway">
    <text>Carbohydrate metabolism; tricarboxylic acid cycle; isocitrate from oxaloacetate: step 1/2.</text>
</comment>
<comment type="subunit">
    <text evidence="2">Homodimer.</text>
</comment>
<comment type="subcellular location">
    <subcellularLocation>
        <location evidence="3">Mitochondrion matrix</location>
    </subcellularLocation>
</comment>
<comment type="miscellaneous">
    <text>Citrate synthase is found in nearly all cells capable of oxidative metabolism.</text>
</comment>
<comment type="similarity">
    <text evidence="5">Belongs to the citrate synthase family.</text>
</comment>
<proteinExistence type="evidence at transcript level"/>
<reference key="1">
    <citation type="submission" date="2003-02" db="EMBL/GenBank/DDBJ databases">
        <authorList>
            <consortium name="NIH - Xenopus Gene Collection (XGC) project"/>
        </authorList>
    </citation>
    <scope>NUCLEOTIDE SEQUENCE [LARGE SCALE MRNA]</scope>
    <source>
        <tissue>Embryo</tissue>
    </source>
</reference>
<dbReference type="EC" id="2.3.3.1"/>
<dbReference type="EMBL" id="BC046571">
    <property type="protein sequence ID" value="AAH46571.1"/>
    <property type="molecule type" value="mRNA"/>
</dbReference>
<dbReference type="RefSeq" id="NP_001080194.1">
    <property type="nucleotide sequence ID" value="NM_001086725.1"/>
</dbReference>
<dbReference type="SMR" id="Q7ZWZ5"/>
<dbReference type="DNASU" id="379886"/>
<dbReference type="GeneID" id="379886"/>
<dbReference type="KEGG" id="xla:379886"/>
<dbReference type="AGR" id="Xenbase:XB-GENE-943167"/>
<dbReference type="CTD" id="379886"/>
<dbReference type="Xenbase" id="XB-GENE-943167">
    <property type="gene designation" value="cs.L"/>
</dbReference>
<dbReference type="OrthoDB" id="8017587at2759"/>
<dbReference type="UniPathway" id="UPA00223">
    <property type="reaction ID" value="UER00717"/>
</dbReference>
<dbReference type="Proteomes" id="UP000186698">
    <property type="component" value="Chromosome 2L"/>
</dbReference>
<dbReference type="Bgee" id="379886">
    <property type="expression patterns" value="Expressed in muscle tissue and 19 other cell types or tissues"/>
</dbReference>
<dbReference type="GO" id="GO:0005759">
    <property type="term" value="C:mitochondrial matrix"/>
    <property type="evidence" value="ECO:0000250"/>
    <property type="project" value="UniProtKB"/>
</dbReference>
<dbReference type="GO" id="GO:0004108">
    <property type="term" value="F:citrate (Si)-synthase activity"/>
    <property type="evidence" value="ECO:0000250"/>
    <property type="project" value="UniProtKB"/>
</dbReference>
<dbReference type="GO" id="GO:0042802">
    <property type="term" value="F:identical protein binding"/>
    <property type="evidence" value="ECO:0000250"/>
    <property type="project" value="UniProtKB"/>
</dbReference>
<dbReference type="GO" id="GO:0005975">
    <property type="term" value="P:carbohydrate metabolic process"/>
    <property type="evidence" value="ECO:0000250"/>
    <property type="project" value="UniProtKB"/>
</dbReference>
<dbReference type="GO" id="GO:0006101">
    <property type="term" value="P:citrate metabolic process"/>
    <property type="evidence" value="ECO:0007669"/>
    <property type="project" value="InterPro"/>
</dbReference>
<dbReference type="GO" id="GO:0006099">
    <property type="term" value="P:tricarboxylic acid cycle"/>
    <property type="evidence" value="ECO:0000318"/>
    <property type="project" value="GO_Central"/>
</dbReference>
<dbReference type="CDD" id="cd06105">
    <property type="entry name" value="ScCit1-2_like"/>
    <property type="match status" value="1"/>
</dbReference>
<dbReference type="FunFam" id="1.10.230.10:FF:000001">
    <property type="entry name" value="Citrate synthase"/>
    <property type="match status" value="1"/>
</dbReference>
<dbReference type="FunFam" id="1.10.580.10:FF:000001">
    <property type="entry name" value="Citrate synthase"/>
    <property type="match status" value="1"/>
</dbReference>
<dbReference type="Gene3D" id="1.10.580.10">
    <property type="entry name" value="Citrate Synthase, domain 1"/>
    <property type="match status" value="1"/>
</dbReference>
<dbReference type="Gene3D" id="1.10.230.10">
    <property type="entry name" value="Cytochrome P450-Terp, domain 2"/>
    <property type="match status" value="1"/>
</dbReference>
<dbReference type="InterPro" id="IPR016142">
    <property type="entry name" value="Citrate_synth-like_lrg_a-sub"/>
</dbReference>
<dbReference type="InterPro" id="IPR016143">
    <property type="entry name" value="Citrate_synth-like_sm_a-sub"/>
</dbReference>
<dbReference type="InterPro" id="IPR002020">
    <property type="entry name" value="Citrate_synthase"/>
</dbReference>
<dbReference type="InterPro" id="IPR019810">
    <property type="entry name" value="Citrate_synthase_AS"/>
</dbReference>
<dbReference type="InterPro" id="IPR010109">
    <property type="entry name" value="Citrate_synthase_euk"/>
</dbReference>
<dbReference type="InterPro" id="IPR036969">
    <property type="entry name" value="Citrate_synthase_sf"/>
</dbReference>
<dbReference type="NCBIfam" id="TIGR01793">
    <property type="entry name" value="cit_synth_euk"/>
    <property type="match status" value="1"/>
</dbReference>
<dbReference type="NCBIfam" id="NF007128">
    <property type="entry name" value="PRK09569.1"/>
    <property type="match status" value="1"/>
</dbReference>
<dbReference type="PANTHER" id="PTHR11739">
    <property type="entry name" value="CITRATE SYNTHASE"/>
    <property type="match status" value="1"/>
</dbReference>
<dbReference type="PANTHER" id="PTHR11739:SF8">
    <property type="entry name" value="CITRATE SYNTHASE, MITOCHONDRIAL"/>
    <property type="match status" value="1"/>
</dbReference>
<dbReference type="Pfam" id="PF00285">
    <property type="entry name" value="Citrate_synt"/>
    <property type="match status" value="1"/>
</dbReference>
<dbReference type="PRINTS" id="PR00143">
    <property type="entry name" value="CITRTSNTHASE"/>
</dbReference>
<dbReference type="SUPFAM" id="SSF48256">
    <property type="entry name" value="Citrate synthase"/>
    <property type="match status" value="1"/>
</dbReference>
<dbReference type="PROSITE" id="PS00480">
    <property type="entry name" value="CITRATE_SYNTHASE"/>
    <property type="match status" value="1"/>
</dbReference>
<accession>Q7ZWZ5</accession>
<evidence type="ECO:0000250" key="1"/>
<evidence type="ECO:0000250" key="2">
    <source>
        <dbReference type="UniProtKB" id="O75390"/>
    </source>
</evidence>
<evidence type="ECO:0000250" key="3">
    <source>
        <dbReference type="UniProtKB" id="P00889"/>
    </source>
</evidence>
<evidence type="ECO:0000255" key="4">
    <source>
        <dbReference type="PROSITE-ProRule" id="PRU10117"/>
    </source>
</evidence>
<evidence type="ECO:0000305" key="5"/>
<name>CISY_XENLA</name>
<sequence length="468" mass="51747">MSLISAGRVCARILGAKNSPCALIAARQASSSTNLKDVLSDLIPKEQTRIKNFKQQHGKTVIGQVTVDMVYGGMRGMKGLVYETSVLDPDEGIRFRGYSIPECQKLLPKAPGGEEPLPEGLFWLLVTGEVPNQDQVNWISKEWAKRAALPSHVVTMLDNFPTNLHPMSQLSAAITALNSESNFARAYAEGVNKAKYWELVYEDSMDLIAKLPCVAAKIYRNLYREGSSIGAIDSNLDWSDNFTNMLGYTDQQFTELMRLYLTIHSDHEGGNVSAHTSHLVGSALSDPYLSFSAAMNGLAGPLHGLANQEVLVWLTSLQKDLGGEVSDEKLRDYIWNTLNSGRVVPGYGHAVLRKTDPRYTCQREFALKHLPDDPMFKLVAQLYKIVPNILLEQGKAKNPWPNVDAHSGVLLQYYGMTEMNYYTVLFGVSRALGVLSQLIWSRALGFPLERPKSMSTDGLMQLVGSKSG</sequence>
<protein>
    <recommendedName>
        <fullName>Citrate synthase, mitochondrial</fullName>
        <ecNumber>2.3.3.1</ecNumber>
    </recommendedName>
    <alternativeName>
        <fullName>Citrate (Si)-synthase</fullName>
    </alternativeName>
</protein>
<keyword id="KW-0496">Mitochondrion</keyword>
<keyword id="KW-1185">Reference proteome</keyword>
<keyword id="KW-0808">Transferase</keyword>
<keyword id="KW-0809">Transit peptide</keyword>
<keyword id="KW-0816">Tricarboxylic acid cycle</keyword>
<gene>
    <name type="primary">cs</name>
</gene>
<organism>
    <name type="scientific">Xenopus laevis</name>
    <name type="common">African clawed frog</name>
    <dbReference type="NCBI Taxonomy" id="8355"/>
    <lineage>
        <taxon>Eukaryota</taxon>
        <taxon>Metazoa</taxon>
        <taxon>Chordata</taxon>
        <taxon>Craniata</taxon>
        <taxon>Vertebrata</taxon>
        <taxon>Euteleostomi</taxon>
        <taxon>Amphibia</taxon>
        <taxon>Batrachia</taxon>
        <taxon>Anura</taxon>
        <taxon>Pipoidea</taxon>
        <taxon>Pipidae</taxon>
        <taxon>Xenopodinae</taxon>
        <taxon>Xenopus</taxon>
        <taxon>Xenopus</taxon>
    </lineage>
</organism>